<reference key="1">
    <citation type="journal article" date="2009" name="PLoS Genet.">
        <title>Organised genome dynamics in the Escherichia coli species results in highly diverse adaptive paths.</title>
        <authorList>
            <person name="Touchon M."/>
            <person name="Hoede C."/>
            <person name="Tenaillon O."/>
            <person name="Barbe V."/>
            <person name="Baeriswyl S."/>
            <person name="Bidet P."/>
            <person name="Bingen E."/>
            <person name="Bonacorsi S."/>
            <person name="Bouchier C."/>
            <person name="Bouvet O."/>
            <person name="Calteau A."/>
            <person name="Chiapello H."/>
            <person name="Clermont O."/>
            <person name="Cruveiller S."/>
            <person name="Danchin A."/>
            <person name="Diard M."/>
            <person name="Dossat C."/>
            <person name="Karoui M.E."/>
            <person name="Frapy E."/>
            <person name="Garry L."/>
            <person name="Ghigo J.M."/>
            <person name="Gilles A.M."/>
            <person name="Johnson J."/>
            <person name="Le Bouguenec C."/>
            <person name="Lescat M."/>
            <person name="Mangenot S."/>
            <person name="Martinez-Jehanne V."/>
            <person name="Matic I."/>
            <person name="Nassif X."/>
            <person name="Oztas S."/>
            <person name="Petit M.A."/>
            <person name="Pichon C."/>
            <person name="Rouy Z."/>
            <person name="Ruf C.S."/>
            <person name="Schneider D."/>
            <person name="Tourret J."/>
            <person name="Vacherie B."/>
            <person name="Vallenet D."/>
            <person name="Medigue C."/>
            <person name="Rocha E.P.C."/>
            <person name="Denamur E."/>
        </authorList>
    </citation>
    <scope>NUCLEOTIDE SEQUENCE [LARGE SCALE GENOMIC DNA]</scope>
    <source>
        <strain>55989 / EAEC</strain>
    </source>
</reference>
<keyword id="KW-0028">Amino-acid biosynthesis</keyword>
<keyword id="KW-0067">ATP-binding</keyword>
<keyword id="KW-0963">Cytoplasm</keyword>
<keyword id="KW-0418">Kinase</keyword>
<keyword id="KW-0547">Nucleotide-binding</keyword>
<keyword id="KW-1185">Reference proteome</keyword>
<keyword id="KW-0791">Threonine biosynthesis</keyword>
<keyword id="KW-0808">Transferase</keyword>
<sequence length="310" mass="33610">MVKVYAPASSANMSVGFDVLGAAVTPVDGALLGDVVTVEAAETFSLNNLGRFADKLPSEPRENIVYQCWERFCQELGKQIPVAMTLEKNMPIGSGLGSSACSVVAALMAMNEHCGKPLNDTRLLALMGELEGRISGSIHYDNVAPCFLGGMQLMIEENDIISQQVPGFDEWLWVLAYPGIKVSTAEARAILPAQYRRQDCIAHGRHLAGFIHACYSRQPELAAKLMKDVIAEPYRERLLPGFRQARQAVAEIGAVASGISGSGPTLFALCDKPDTAQRVADWLGKNYLQNQEGFVHICRLDTAGARVLEN</sequence>
<evidence type="ECO:0000255" key="1">
    <source>
        <dbReference type="HAMAP-Rule" id="MF_00384"/>
    </source>
</evidence>
<accession>B7L4C8</accession>
<dbReference type="EC" id="2.7.1.39" evidence="1"/>
<dbReference type="EMBL" id="CU928145">
    <property type="protein sequence ID" value="CAU95892.1"/>
    <property type="molecule type" value="Genomic_DNA"/>
</dbReference>
<dbReference type="RefSeq" id="WP_000241660.1">
    <property type="nucleotide sequence ID" value="NC_011748.1"/>
</dbReference>
<dbReference type="SMR" id="B7L4C8"/>
<dbReference type="GeneID" id="75202912"/>
<dbReference type="KEGG" id="eck:EC55989_0003"/>
<dbReference type="HOGENOM" id="CLU_041243_1_1_6"/>
<dbReference type="UniPathway" id="UPA00050">
    <property type="reaction ID" value="UER00064"/>
</dbReference>
<dbReference type="Proteomes" id="UP000000746">
    <property type="component" value="Chromosome"/>
</dbReference>
<dbReference type="GO" id="GO:0005737">
    <property type="term" value="C:cytoplasm"/>
    <property type="evidence" value="ECO:0007669"/>
    <property type="project" value="UniProtKB-SubCell"/>
</dbReference>
<dbReference type="GO" id="GO:0005524">
    <property type="term" value="F:ATP binding"/>
    <property type="evidence" value="ECO:0007669"/>
    <property type="project" value="UniProtKB-UniRule"/>
</dbReference>
<dbReference type="GO" id="GO:0004413">
    <property type="term" value="F:homoserine kinase activity"/>
    <property type="evidence" value="ECO:0007669"/>
    <property type="project" value="UniProtKB-UniRule"/>
</dbReference>
<dbReference type="GO" id="GO:0009088">
    <property type="term" value="P:threonine biosynthetic process"/>
    <property type="evidence" value="ECO:0007669"/>
    <property type="project" value="UniProtKB-UniRule"/>
</dbReference>
<dbReference type="FunFam" id="3.30.230.10:FF:000020">
    <property type="entry name" value="Homoserine kinase"/>
    <property type="match status" value="1"/>
</dbReference>
<dbReference type="FunFam" id="3.30.70.890:FF:000002">
    <property type="entry name" value="Homoserine kinase"/>
    <property type="match status" value="1"/>
</dbReference>
<dbReference type="Gene3D" id="3.30.230.10">
    <property type="match status" value="1"/>
</dbReference>
<dbReference type="Gene3D" id="3.30.70.890">
    <property type="entry name" value="GHMP kinase, C-terminal domain"/>
    <property type="match status" value="1"/>
</dbReference>
<dbReference type="HAMAP" id="MF_00384">
    <property type="entry name" value="Homoser_kinase"/>
    <property type="match status" value="1"/>
</dbReference>
<dbReference type="InterPro" id="IPR013750">
    <property type="entry name" value="GHMP_kinase_C_dom"/>
</dbReference>
<dbReference type="InterPro" id="IPR036554">
    <property type="entry name" value="GHMP_kinase_C_sf"/>
</dbReference>
<dbReference type="InterPro" id="IPR006204">
    <property type="entry name" value="GHMP_kinase_N_dom"/>
</dbReference>
<dbReference type="InterPro" id="IPR006203">
    <property type="entry name" value="GHMP_knse_ATP-bd_CS"/>
</dbReference>
<dbReference type="InterPro" id="IPR000870">
    <property type="entry name" value="Homoserine_kinase"/>
</dbReference>
<dbReference type="InterPro" id="IPR020568">
    <property type="entry name" value="Ribosomal_Su5_D2-typ_SF"/>
</dbReference>
<dbReference type="InterPro" id="IPR014721">
    <property type="entry name" value="Ribsml_uS5_D2-typ_fold_subgr"/>
</dbReference>
<dbReference type="NCBIfam" id="NF002288">
    <property type="entry name" value="PRK01212.1-4"/>
    <property type="match status" value="1"/>
</dbReference>
<dbReference type="NCBIfam" id="TIGR00191">
    <property type="entry name" value="thrB"/>
    <property type="match status" value="1"/>
</dbReference>
<dbReference type="PANTHER" id="PTHR20861:SF1">
    <property type="entry name" value="HOMOSERINE KINASE"/>
    <property type="match status" value="1"/>
</dbReference>
<dbReference type="PANTHER" id="PTHR20861">
    <property type="entry name" value="HOMOSERINE/4-DIPHOSPHOCYTIDYL-2-C-METHYL-D-ERYTHRITOL KINASE"/>
    <property type="match status" value="1"/>
</dbReference>
<dbReference type="Pfam" id="PF08544">
    <property type="entry name" value="GHMP_kinases_C"/>
    <property type="match status" value="1"/>
</dbReference>
<dbReference type="Pfam" id="PF00288">
    <property type="entry name" value="GHMP_kinases_N"/>
    <property type="match status" value="1"/>
</dbReference>
<dbReference type="PIRSF" id="PIRSF000676">
    <property type="entry name" value="Homoser_kin"/>
    <property type="match status" value="1"/>
</dbReference>
<dbReference type="PRINTS" id="PR00958">
    <property type="entry name" value="HOMSERKINASE"/>
</dbReference>
<dbReference type="SUPFAM" id="SSF55060">
    <property type="entry name" value="GHMP Kinase, C-terminal domain"/>
    <property type="match status" value="1"/>
</dbReference>
<dbReference type="SUPFAM" id="SSF54211">
    <property type="entry name" value="Ribosomal protein S5 domain 2-like"/>
    <property type="match status" value="1"/>
</dbReference>
<dbReference type="PROSITE" id="PS00627">
    <property type="entry name" value="GHMP_KINASES_ATP"/>
    <property type="match status" value="1"/>
</dbReference>
<organism>
    <name type="scientific">Escherichia coli (strain 55989 / EAEC)</name>
    <dbReference type="NCBI Taxonomy" id="585055"/>
    <lineage>
        <taxon>Bacteria</taxon>
        <taxon>Pseudomonadati</taxon>
        <taxon>Pseudomonadota</taxon>
        <taxon>Gammaproteobacteria</taxon>
        <taxon>Enterobacterales</taxon>
        <taxon>Enterobacteriaceae</taxon>
        <taxon>Escherichia</taxon>
    </lineage>
</organism>
<feature type="chain" id="PRO_1000134250" description="Homoserine kinase">
    <location>
        <begin position="1"/>
        <end position="310"/>
    </location>
</feature>
<feature type="binding site" evidence="1">
    <location>
        <begin position="91"/>
        <end position="101"/>
    </location>
    <ligand>
        <name>ATP</name>
        <dbReference type="ChEBI" id="CHEBI:30616"/>
    </ligand>
</feature>
<proteinExistence type="inferred from homology"/>
<gene>
    <name evidence="1" type="primary">thrB</name>
    <name type="ordered locus">EC55989_0003</name>
</gene>
<name>KHSE_ECO55</name>
<comment type="function">
    <text evidence="1">Catalyzes the ATP-dependent phosphorylation of L-homoserine to L-homoserine phosphate.</text>
</comment>
<comment type="catalytic activity">
    <reaction evidence="1">
        <text>L-homoserine + ATP = O-phospho-L-homoserine + ADP + H(+)</text>
        <dbReference type="Rhea" id="RHEA:13985"/>
        <dbReference type="ChEBI" id="CHEBI:15378"/>
        <dbReference type="ChEBI" id="CHEBI:30616"/>
        <dbReference type="ChEBI" id="CHEBI:57476"/>
        <dbReference type="ChEBI" id="CHEBI:57590"/>
        <dbReference type="ChEBI" id="CHEBI:456216"/>
        <dbReference type="EC" id="2.7.1.39"/>
    </reaction>
</comment>
<comment type="pathway">
    <text evidence="1">Amino-acid biosynthesis; L-threonine biosynthesis; L-threonine from L-aspartate: step 4/5.</text>
</comment>
<comment type="subcellular location">
    <subcellularLocation>
        <location evidence="1">Cytoplasm</location>
    </subcellularLocation>
</comment>
<comment type="similarity">
    <text evidence="1">Belongs to the GHMP kinase family. Homoserine kinase subfamily.</text>
</comment>
<protein>
    <recommendedName>
        <fullName evidence="1">Homoserine kinase</fullName>
        <shortName evidence="1">HK</shortName>
        <shortName evidence="1">HSK</shortName>
        <ecNumber evidence="1">2.7.1.39</ecNumber>
    </recommendedName>
</protein>